<gene>
    <name type="primary">SRP9</name>
</gene>
<name>SRP09_HUMAN</name>
<organism>
    <name type="scientific">Homo sapiens</name>
    <name type="common">Human</name>
    <dbReference type="NCBI Taxonomy" id="9606"/>
    <lineage>
        <taxon>Eukaryota</taxon>
        <taxon>Metazoa</taxon>
        <taxon>Chordata</taxon>
        <taxon>Craniata</taxon>
        <taxon>Vertebrata</taxon>
        <taxon>Euteleostomi</taxon>
        <taxon>Mammalia</taxon>
        <taxon>Eutheria</taxon>
        <taxon>Euarchontoglires</taxon>
        <taxon>Primates</taxon>
        <taxon>Haplorrhini</taxon>
        <taxon>Catarrhini</taxon>
        <taxon>Hominidae</taxon>
        <taxon>Homo</taxon>
    </lineage>
</organism>
<keyword id="KW-0002">3D-structure</keyword>
<keyword id="KW-0007">Acetylation</keyword>
<keyword id="KW-0025">Alternative splicing</keyword>
<keyword id="KW-0963">Cytoplasm</keyword>
<keyword id="KW-0903">Direct protein sequencing</keyword>
<keyword id="KW-1267">Proteomics identification</keyword>
<keyword id="KW-1185">Reference proteome</keyword>
<keyword id="KW-0687">Ribonucleoprotein</keyword>
<keyword id="KW-0694">RNA-binding</keyword>
<keyword id="KW-0733">Signal recognition particle</keyword>
<dbReference type="EMBL" id="U20998">
    <property type="protein sequence ID" value="AAA70170.1"/>
    <property type="molecule type" value="mRNA"/>
</dbReference>
<dbReference type="EMBL" id="EF488978">
    <property type="protein sequence ID" value="ABP02070.1"/>
    <property type="molecule type" value="mRNA"/>
</dbReference>
<dbReference type="EMBL" id="AK289595">
    <property type="protein sequence ID" value="BAF82284.1"/>
    <property type="molecule type" value="mRNA"/>
</dbReference>
<dbReference type="EMBL" id="CH471066">
    <property type="protein sequence ID" value="EAW50106.1"/>
    <property type="molecule type" value="Genomic_DNA"/>
</dbReference>
<dbReference type="EMBL" id="CH471098">
    <property type="protein sequence ID" value="EAW69750.1"/>
    <property type="molecule type" value="Genomic_DNA"/>
</dbReference>
<dbReference type="EMBL" id="CH471098">
    <property type="protein sequence ID" value="EAW69751.1"/>
    <property type="molecule type" value="Genomic_DNA"/>
</dbReference>
<dbReference type="EMBL" id="BC008443">
    <property type="protein sequence ID" value="AAH08443.1"/>
    <property type="molecule type" value="mRNA"/>
</dbReference>
<dbReference type="EMBL" id="BC067845">
    <property type="protein sequence ID" value="AAH67845.1"/>
    <property type="molecule type" value="mRNA"/>
</dbReference>
<dbReference type="EMBL" id="BC021995">
    <property type="protein sequence ID" value="AAH21995.1"/>
    <property type="molecule type" value="mRNA"/>
</dbReference>
<dbReference type="EMBL" id="BC015094">
    <property type="protein sequence ID" value="AAH15094.1"/>
    <property type="molecule type" value="mRNA"/>
</dbReference>
<dbReference type="EMBL" id="BC022415">
    <property type="protein sequence ID" value="AAH22415.1"/>
    <property type="molecule type" value="mRNA"/>
</dbReference>
<dbReference type="EMBL" id="BC066957">
    <property type="protein sequence ID" value="AAH66957.1"/>
    <property type="molecule type" value="mRNA"/>
</dbReference>
<dbReference type="CCDS" id="CCDS1546.1">
    <molecule id="P49458-1"/>
</dbReference>
<dbReference type="CCDS" id="CCDS44323.1">
    <molecule id="P49458-2"/>
</dbReference>
<dbReference type="PIR" id="A57292">
    <property type="entry name" value="A57292"/>
</dbReference>
<dbReference type="RefSeq" id="NP_001123912.1">
    <molecule id="P49458-2"/>
    <property type="nucleotide sequence ID" value="NM_001130440.2"/>
</dbReference>
<dbReference type="RefSeq" id="NP_003124.1">
    <molecule id="P49458-1"/>
    <property type="nucleotide sequence ID" value="NM_003133.6"/>
</dbReference>
<dbReference type="PDB" id="1E8O">
    <property type="method" value="X-ray"/>
    <property type="resolution" value="3.20 A"/>
    <property type="chains" value="A/C=2-86"/>
</dbReference>
<dbReference type="PDB" id="1E8S">
    <property type="method" value="X-ray"/>
    <property type="resolution" value="4.00 A"/>
    <property type="chains" value="A=2-86"/>
</dbReference>
<dbReference type="PDB" id="1RY1">
    <property type="method" value="EM"/>
    <property type="resolution" value="12.00 A"/>
    <property type="chains" value="C=2-86"/>
</dbReference>
<dbReference type="PDB" id="4UYJ">
    <property type="method" value="X-ray"/>
    <property type="resolution" value="3.35 A"/>
    <property type="chains" value="A/C=1-85"/>
</dbReference>
<dbReference type="PDB" id="4UYK">
    <property type="method" value="X-ray"/>
    <property type="resolution" value="3.22 A"/>
    <property type="chains" value="A=1-85"/>
</dbReference>
<dbReference type="PDB" id="5AOX">
    <property type="method" value="X-ray"/>
    <property type="resolution" value="2.04 A"/>
    <property type="chains" value="A/D=2-86"/>
</dbReference>
<dbReference type="PDB" id="7NFX">
    <property type="method" value="EM"/>
    <property type="resolution" value="3.20 A"/>
    <property type="chains" value="w=1-86"/>
</dbReference>
<dbReference type="PDBsum" id="1E8O"/>
<dbReference type="PDBsum" id="1E8S"/>
<dbReference type="PDBsum" id="1RY1"/>
<dbReference type="PDBsum" id="4UYJ"/>
<dbReference type="PDBsum" id="4UYK"/>
<dbReference type="PDBsum" id="5AOX"/>
<dbReference type="PDBsum" id="7NFX"/>
<dbReference type="EMDB" id="EMD-12303"/>
<dbReference type="SMR" id="P49458"/>
<dbReference type="BioGRID" id="112604">
    <property type="interactions" value="452"/>
</dbReference>
<dbReference type="ComplexPortal" id="CPX-2652">
    <property type="entry name" value="Signal recognition particle"/>
</dbReference>
<dbReference type="DIP" id="DIP-6151N"/>
<dbReference type="FunCoup" id="P49458">
    <property type="interactions" value="2023"/>
</dbReference>
<dbReference type="IntAct" id="P49458">
    <property type="interactions" value="337"/>
</dbReference>
<dbReference type="MINT" id="P49458"/>
<dbReference type="STRING" id="9606.ENSP00000305230"/>
<dbReference type="TCDB" id="3.A.5.9.1">
    <property type="family name" value="the general secretory pathway (sec) family"/>
</dbReference>
<dbReference type="CarbonylDB" id="P49458"/>
<dbReference type="GlyGen" id="P49458">
    <property type="glycosylation" value="1 site, 1 O-linked glycan (1 site)"/>
</dbReference>
<dbReference type="iPTMnet" id="P49458"/>
<dbReference type="MetOSite" id="P49458"/>
<dbReference type="PhosphoSitePlus" id="P49458"/>
<dbReference type="SwissPalm" id="P49458"/>
<dbReference type="BioMuta" id="SRP9"/>
<dbReference type="DMDM" id="1351111"/>
<dbReference type="jPOST" id="P49458"/>
<dbReference type="MassIVE" id="P49458"/>
<dbReference type="PaxDb" id="9606-ENSP00000305230"/>
<dbReference type="PeptideAtlas" id="P49458"/>
<dbReference type="ProteomicsDB" id="56016">
    <molecule id="P49458-1"/>
</dbReference>
<dbReference type="ProteomicsDB" id="56017">
    <molecule id="P49458-2"/>
</dbReference>
<dbReference type="Pumba" id="P49458"/>
<dbReference type="TopDownProteomics" id="P49458-1">
    <molecule id="P49458-1"/>
</dbReference>
<dbReference type="Antibodypedia" id="47125">
    <property type="antibodies" value="90 antibodies from 19 providers"/>
</dbReference>
<dbReference type="DNASU" id="6726"/>
<dbReference type="Ensembl" id="ENST00000304786.12">
    <molecule id="P49458-1"/>
    <property type="protein sequence ID" value="ENSP00000305230.7"/>
    <property type="gene ID" value="ENSG00000143742.14"/>
</dbReference>
<dbReference type="Ensembl" id="ENST00000366839.8">
    <molecule id="P49458-2"/>
    <property type="protein sequence ID" value="ENSP00000355804.4"/>
    <property type="gene ID" value="ENSG00000143742.14"/>
</dbReference>
<dbReference type="Ensembl" id="ENST00000619790.4">
    <molecule id="P49458-2"/>
    <property type="protein sequence ID" value="ENSP00000485002.1"/>
    <property type="gene ID" value="ENSG00000143742.14"/>
</dbReference>
<dbReference type="Ensembl" id="ENST00000651465.1">
    <molecule id="P49458-2"/>
    <property type="protein sequence ID" value="ENSP00000498359.1"/>
    <property type="gene ID" value="ENSG00000143742.14"/>
</dbReference>
<dbReference type="GeneID" id="6726"/>
<dbReference type="KEGG" id="hsa:6726"/>
<dbReference type="MANE-Select" id="ENST00000304786.12">
    <property type="protein sequence ID" value="ENSP00000305230.7"/>
    <property type="RefSeq nucleotide sequence ID" value="NM_003133.6"/>
    <property type="RefSeq protein sequence ID" value="NP_003124.1"/>
</dbReference>
<dbReference type="UCSC" id="uc001hpg.4">
    <molecule id="P49458-1"/>
    <property type="organism name" value="human"/>
</dbReference>
<dbReference type="AGR" id="HGNC:11304"/>
<dbReference type="CTD" id="6726"/>
<dbReference type="DisGeNET" id="6726"/>
<dbReference type="GeneCards" id="SRP9"/>
<dbReference type="HGNC" id="HGNC:11304">
    <property type="gene designation" value="SRP9"/>
</dbReference>
<dbReference type="HPA" id="ENSG00000143742">
    <property type="expression patterns" value="Low tissue specificity"/>
</dbReference>
<dbReference type="MIM" id="600707">
    <property type="type" value="gene"/>
</dbReference>
<dbReference type="neXtProt" id="NX_P49458"/>
<dbReference type="OpenTargets" id="ENSG00000143742"/>
<dbReference type="PharmGKB" id="PA36128"/>
<dbReference type="VEuPathDB" id="HostDB:ENSG00000143742"/>
<dbReference type="eggNOG" id="KOG3465">
    <property type="taxonomic scope" value="Eukaryota"/>
</dbReference>
<dbReference type="GeneTree" id="ENSGT00390000018505"/>
<dbReference type="HOGENOM" id="CLU_2644400_0_0_1"/>
<dbReference type="InParanoid" id="P49458"/>
<dbReference type="OMA" id="YYQVWEE"/>
<dbReference type="OrthoDB" id="360923at2759"/>
<dbReference type="PAN-GO" id="P49458">
    <property type="GO annotations" value="2 GO annotations based on evolutionary models"/>
</dbReference>
<dbReference type="PhylomeDB" id="P49458"/>
<dbReference type="TreeFam" id="TF106246"/>
<dbReference type="PathwayCommons" id="P49458"/>
<dbReference type="Reactome" id="R-HSA-1799339">
    <property type="pathway name" value="SRP-dependent cotranslational protein targeting to membrane"/>
</dbReference>
<dbReference type="SignaLink" id="P49458"/>
<dbReference type="BioGRID-ORCS" id="6726">
    <property type="hits" value="660 hits in 1132 CRISPR screens"/>
</dbReference>
<dbReference type="CD-CODE" id="91857CE7">
    <property type="entry name" value="Nucleolus"/>
</dbReference>
<dbReference type="CD-CODE" id="DEE660B4">
    <property type="entry name" value="Stress granule"/>
</dbReference>
<dbReference type="ChiTaRS" id="SRP9">
    <property type="organism name" value="human"/>
</dbReference>
<dbReference type="EvolutionaryTrace" id="P49458"/>
<dbReference type="GenomeRNAi" id="6726"/>
<dbReference type="Pharos" id="P49458">
    <property type="development level" value="Tbio"/>
</dbReference>
<dbReference type="PRO" id="PR:P49458"/>
<dbReference type="Proteomes" id="UP000005640">
    <property type="component" value="Chromosome 1"/>
</dbReference>
<dbReference type="RNAct" id="P49458">
    <property type="molecule type" value="protein"/>
</dbReference>
<dbReference type="Bgee" id="ENSG00000143742">
    <property type="expression patterns" value="Expressed in ganglionic eminence and 105 other cell types or tissues"/>
</dbReference>
<dbReference type="ExpressionAtlas" id="P49458">
    <property type="expression patterns" value="baseline and differential"/>
</dbReference>
<dbReference type="GO" id="GO:0005829">
    <property type="term" value="C:cytosol"/>
    <property type="evidence" value="ECO:0000304"/>
    <property type="project" value="Reactome"/>
</dbReference>
<dbReference type="GO" id="GO:0005785">
    <property type="term" value="C:signal recognition particle receptor complex"/>
    <property type="evidence" value="ECO:0000304"/>
    <property type="project" value="ProtInc"/>
</dbReference>
<dbReference type="GO" id="GO:0005786">
    <property type="term" value="C:signal recognition particle, endoplasmic reticulum targeting"/>
    <property type="evidence" value="ECO:0000318"/>
    <property type="project" value="GO_Central"/>
</dbReference>
<dbReference type="GO" id="GO:0008312">
    <property type="term" value="F:7S RNA binding"/>
    <property type="evidence" value="ECO:0007669"/>
    <property type="project" value="InterPro"/>
</dbReference>
<dbReference type="GO" id="GO:0003723">
    <property type="term" value="F:RNA binding"/>
    <property type="evidence" value="ECO:0000304"/>
    <property type="project" value="ProtInc"/>
</dbReference>
<dbReference type="GO" id="GO:0005047">
    <property type="term" value="F:signal recognition particle binding"/>
    <property type="evidence" value="ECO:0000304"/>
    <property type="project" value="ProtInc"/>
</dbReference>
<dbReference type="GO" id="GO:0045900">
    <property type="term" value="P:negative regulation of translational elongation"/>
    <property type="evidence" value="ECO:0007669"/>
    <property type="project" value="InterPro"/>
</dbReference>
<dbReference type="GO" id="GO:0006614">
    <property type="term" value="P:SRP-dependent cotranslational protein targeting to membrane"/>
    <property type="evidence" value="ECO:0000318"/>
    <property type="project" value="GO_Central"/>
</dbReference>
<dbReference type="FunFam" id="3.30.720.10:FF:000001">
    <property type="entry name" value="Signal recognition particle 9 kDa protein"/>
    <property type="match status" value="1"/>
</dbReference>
<dbReference type="Gene3D" id="3.30.720.10">
    <property type="entry name" value="Signal recognition particle alu RNA binding heterodimer, srp9/1"/>
    <property type="match status" value="1"/>
</dbReference>
<dbReference type="InterPro" id="IPR009018">
    <property type="entry name" value="Signal_recog_particle_SRP9/14"/>
</dbReference>
<dbReference type="InterPro" id="IPR008832">
    <property type="entry name" value="SRP9"/>
</dbReference>
<dbReference type="InterPro" id="IPR039914">
    <property type="entry name" value="SRP9-like"/>
</dbReference>
<dbReference type="InterPro" id="IPR039432">
    <property type="entry name" value="SRP9_dom"/>
</dbReference>
<dbReference type="PANTHER" id="PTHR12834">
    <property type="entry name" value="SIGNAL RECOGNITION PARTICLE 9 KDA PROTEIN"/>
    <property type="match status" value="1"/>
</dbReference>
<dbReference type="PANTHER" id="PTHR12834:SF12">
    <property type="entry name" value="SIGNAL RECOGNITION PARTICLE 9 KDA PROTEIN"/>
    <property type="match status" value="1"/>
</dbReference>
<dbReference type="Pfam" id="PF05486">
    <property type="entry name" value="SRP9-21"/>
    <property type="match status" value="1"/>
</dbReference>
<dbReference type="PIRSF" id="PIRSF017029">
    <property type="entry name" value="Signal_recog_particle_SRP9"/>
    <property type="match status" value="1"/>
</dbReference>
<dbReference type="SUPFAM" id="SSF54762">
    <property type="entry name" value="Signal recognition particle alu RNA binding heterodimer, SRP9/14"/>
    <property type="match status" value="1"/>
</dbReference>
<reference key="1">
    <citation type="journal article" date="1995" name="J. Biol. Chem.">
        <title>Human signal recognition particle (SRP) Alu-associated protein also binds Alu interspersed repeat sequence RNAs. Characterization of human SRP9.</title>
        <authorList>
            <person name="Hsu K."/>
            <person name="Chang D.-Y."/>
            <person name="Maraia R.J."/>
        </authorList>
    </citation>
    <scope>NUCLEOTIDE SEQUENCE [MRNA] (ISOFORM 1)</scope>
</reference>
<reference key="2">
    <citation type="submission" date="2007-03" db="EMBL/GenBank/DDBJ databases">
        <title>Molecular cloning of a novel isoform of human signal recognition particle 9 kda (SRP9i).</title>
        <authorList>
            <person name="Lee W.K."/>
            <person name="Sohn Y.-W."/>
            <person name="Kim H."/>
        </authorList>
    </citation>
    <scope>NUCLEOTIDE SEQUENCE [MRNA] (ISOFORM 2)</scope>
</reference>
<reference key="3">
    <citation type="journal article" date="2004" name="Nat. Genet.">
        <title>Complete sequencing and characterization of 21,243 full-length human cDNAs.</title>
        <authorList>
            <person name="Ota T."/>
            <person name="Suzuki Y."/>
            <person name="Nishikawa T."/>
            <person name="Otsuki T."/>
            <person name="Sugiyama T."/>
            <person name="Irie R."/>
            <person name="Wakamatsu A."/>
            <person name="Hayashi K."/>
            <person name="Sato H."/>
            <person name="Nagai K."/>
            <person name="Kimura K."/>
            <person name="Makita H."/>
            <person name="Sekine M."/>
            <person name="Obayashi M."/>
            <person name="Nishi T."/>
            <person name="Shibahara T."/>
            <person name="Tanaka T."/>
            <person name="Ishii S."/>
            <person name="Yamamoto J."/>
            <person name="Saito K."/>
            <person name="Kawai Y."/>
            <person name="Isono Y."/>
            <person name="Nakamura Y."/>
            <person name="Nagahari K."/>
            <person name="Murakami K."/>
            <person name="Yasuda T."/>
            <person name="Iwayanagi T."/>
            <person name="Wagatsuma M."/>
            <person name="Shiratori A."/>
            <person name="Sudo H."/>
            <person name="Hosoiri T."/>
            <person name="Kaku Y."/>
            <person name="Kodaira H."/>
            <person name="Kondo H."/>
            <person name="Sugawara M."/>
            <person name="Takahashi M."/>
            <person name="Kanda K."/>
            <person name="Yokoi T."/>
            <person name="Furuya T."/>
            <person name="Kikkawa E."/>
            <person name="Omura Y."/>
            <person name="Abe K."/>
            <person name="Kamihara K."/>
            <person name="Katsuta N."/>
            <person name="Sato K."/>
            <person name="Tanikawa M."/>
            <person name="Yamazaki M."/>
            <person name="Ninomiya K."/>
            <person name="Ishibashi T."/>
            <person name="Yamashita H."/>
            <person name="Murakawa K."/>
            <person name="Fujimori K."/>
            <person name="Tanai H."/>
            <person name="Kimata M."/>
            <person name="Watanabe M."/>
            <person name="Hiraoka S."/>
            <person name="Chiba Y."/>
            <person name="Ishida S."/>
            <person name="Ono Y."/>
            <person name="Takiguchi S."/>
            <person name="Watanabe S."/>
            <person name="Yosida M."/>
            <person name="Hotuta T."/>
            <person name="Kusano J."/>
            <person name="Kanehori K."/>
            <person name="Takahashi-Fujii A."/>
            <person name="Hara H."/>
            <person name="Tanase T.-O."/>
            <person name="Nomura Y."/>
            <person name="Togiya S."/>
            <person name="Komai F."/>
            <person name="Hara R."/>
            <person name="Takeuchi K."/>
            <person name="Arita M."/>
            <person name="Imose N."/>
            <person name="Musashino K."/>
            <person name="Yuuki H."/>
            <person name="Oshima A."/>
            <person name="Sasaki N."/>
            <person name="Aotsuka S."/>
            <person name="Yoshikawa Y."/>
            <person name="Matsunawa H."/>
            <person name="Ichihara T."/>
            <person name="Shiohata N."/>
            <person name="Sano S."/>
            <person name="Moriya S."/>
            <person name="Momiyama H."/>
            <person name="Satoh N."/>
            <person name="Takami S."/>
            <person name="Terashima Y."/>
            <person name="Suzuki O."/>
            <person name="Nakagawa S."/>
            <person name="Senoh A."/>
            <person name="Mizoguchi H."/>
            <person name="Goto Y."/>
            <person name="Shimizu F."/>
            <person name="Wakebe H."/>
            <person name="Hishigaki H."/>
            <person name="Watanabe T."/>
            <person name="Sugiyama A."/>
            <person name="Takemoto M."/>
            <person name="Kawakami B."/>
            <person name="Yamazaki M."/>
            <person name="Watanabe K."/>
            <person name="Kumagai A."/>
            <person name="Itakura S."/>
            <person name="Fukuzumi Y."/>
            <person name="Fujimori Y."/>
            <person name="Komiyama M."/>
            <person name="Tashiro H."/>
            <person name="Tanigami A."/>
            <person name="Fujiwara T."/>
            <person name="Ono T."/>
            <person name="Yamada K."/>
            <person name="Fujii Y."/>
            <person name="Ozaki K."/>
            <person name="Hirao M."/>
            <person name="Ohmori Y."/>
            <person name="Kawabata A."/>
            <person name="Hikiji T."/>
            <person name="Kobatake N."/>
            <person name="Inagaki H."/>
            <person name="Ikema Y."/>
            <person name="Okamoto S."/>
            <person name="Okitani R."/>
            <person name="Kawakami T."/>
            <person name="Noguchi S."/>
            <person name="Itoh T."/>
            <person name="Shigeta K."/>
            <person name="Senba T."/>
            <person name="Matsumura K."/>
            <person name="Nakajima Y."/>
            <person name="Mizuno T."/>
            <person name="Morinaga M."/>
            <person name="Sasaki M."/>
            <person name="Togashi T."/>
            <person name="Oyama M."/>
            <person name="Hata H."/>
            <person name="Watanabe M."/>
            <person name="Komatsu T."/>
            <person name="Mizushima-Sugano J."/>
            <person name="Satoh T."/>
            <person name="Shirai Y."/>
            <person name="Takahashi Y."/>
            <person name="Nakagawa K."/>
            <person name="Okumura K."/>
            <person name="Nagase T."/>
            <person name="Nomura N."/>
            <person name="Kikuchi H."/>
            <person name="Masuho Y."/>
            <person name="Yamashita R."/>
            <person name="Nakai K."/>
            <person name="Yada T."/>
            <person name="Nakamura Y."/>
            <person name="Ohara O."/>
            <person name="Isogai T."/>
            <person name="Sugano S."/>
        </authorList>
    </citation>
    <scope>NUCLEOTIDE SEQUENCE [LARGE SCALE MRNA]</scope>
    <source>
        <tissue>Brain cortex</tissue>
    </source>
</reference>
<reference key="4">
    <citation type="submission" date="2005-07" db="EMBL/GenBank/DDBJ databases">
        <authorList>
            <person name="Mural R.J."/>
            <person name="Istrail S."/>
            <person name="Sutton G.G."/>
            <person name="Florea L."/>
            <person name="Halpern A.L."/>
            <person name="Mobarry C.M."/>
            <person name="Lippert R."/>
            <person name="Walenz B."/>
            <person name="Shatkay H."/>
            <person name="Dew I."/>
            <person name="Miller J.R."/>
            <person name="Flanigan M.J."/>
            <person name="Edwards N.J."/>
            <person name="Bolanos R."/>
            <person name="Fasulo D."/>
            <person name="Halldorsson B.V."/>
            <person name="Hannenhalli S."/>
            <person name="Turner R."/>
            <person name="Yooseph S."/>
            <person name="Lu F."/>
            <person name="Nusskern D.R."/>
            <person name="Shue B.C."/>
            <person name="Zheng X.H."/>
            <person name="Zhong F."/>
            <person name="Delcher A.L."/>
            <person name="Huson D.H."/>
            <person name="Kravitz S.A."/>
            <person name="Mouchard L."/>
            <person name="Reinert K."/>
            <person name="Remington K.A."/>
            <person name="Clark A.G."/>
            <person name="Waterman M.S."/>
            <person name="Eichler E.E."/>
            <person name="Adams M.D."/>
            <person name="Hunkapiller M.W."/>
            <person name="Myers E.W."/>
            <person name="Venter J.C."/>
        </authorList>
    </citation>
    <scope>NUCLEOTIDE SEQUENCE [LARGE SCALE GENOMIC DNA]</scope>
</reference>
<reference key="5">
    <citation type="journal article" date="2004" name="Genome Res.">
        <title>The status, quality, and expansion of the NIH full-length cDNA project: the Mammalian Gene Collection (MGC).</title>
        <authorList>
            <consortium name="The MGC Project Team"/>
        </authorList>
    </citation>
    <scope>NUCLEOTIDE SEQUENCE [LARGE SCALE MRNA] (ISOFORMS 1 AND 2)</scope>
    <source>
        <tissue>Bone marrow</tissue>
        <tissue>Brain</tissue>
        <tissue>Skin</tissue>
    </source>
</reference>
<reference key="6">
    <citation type="submission" date="2008-12" db="UniProtKB">
        <authorList>
            <person name="Bienvenut W.V."/>
            <person name="Lilla S."/>
            <person name="von Kriegsheim A."/>
            <person name="Lempens A."/>
            <person name="Kolch W."/>
        </authorList>
    </citation>
    <scope>PROTEIN SEQUENCE OF 2-12 AND 17-2</scope>
    <scope>CLEAVAGE OF INITIATOR METHIONINE</scope>
    <scope>IDENTIFICATION BY MASS SPECTROMETRY</scope>
    <source>
        <tissue>Ovarian carcinoma</tissue>
    </source>
</reference>
<reference key="7">
    <citation type="journal article" date="2009" name="Science">
        <title>Lysine acetylation targets protein complexes and co-regulates major cellular functions.</title>
        <authorList>
            <person name="Choudhary C."/>
            <person name="Kumar C."/>
            <person name="Gnad F."/>
            <person name="Nielsen M.L."/>
            <person name="Rehman M."/>
            <person name="Walther T.C."/>
            <person name="Olsen J.V."/>
            <person name="Mann M."/>
        </authorList>
    </citation>
    <scope>ACETYLATION [LARGE SCALE ANALYSIS] AT LYS-52</scope>
    <scope>IDENTIFICATION BY MASS SPECTROMETRY [LARGE SCALE ANALYSIS]</scope>
</reference>
<reference key="8">
    <citation type="journal article" date="2011" name="BMC Syst. Biol.">
        <title>Initial characterization of the human central proteome.</title>
        <authorList>
            <person name="Burkard T.R."/>
            <person name="Planyavsky M."/>
            <person name="Kaupe I."/>
            <person name="Breitwieser F.P."/>
            <person name="Buerckstuemmer T."/>
            <person name="Bennett K.L."/>
            <person name="Superti-Furga G."/>
            <person name="Colinge J."/>
        </authorList>
    </citation>
    <scope>IDENTIFICATION BY MASS SPECTROMETRY [LARGE SCALE ANALYSIS]</scope>
</reference>
<reference key="9">
    <citation type="journal article" date="2012" name="Proc. Natl. Acad. Sci. U.S.A.">
        <title>N-terminal acetylome analyses and functional insights of the N-terminal acetyltransferase NatB.</title>
        <authorList>
            <person name="Van Damme P."/>
            <person name="Lasa M."/>
            <person name="Polevoda B."/>
            <person name="Gazquez C."/>
            <person name="Elosegui-Artola A."/>
            <person name="Kim D.S."/>
            <person name="De Juan-Pardo E."/>
            <person name="Demeyer K."/>
            <person name="Hole K."/>
            <person name="Larrea E."/>
            <person name="Timmerman E."/>
            <person name="Prieto J."/>
            <person name="Arnesen T."/>
            <person name="Sherman F."/>
            <person name="Gevaert K."/>
            <person name="Aldabe R."/>
        </authorList>
    </citation>
    <scope>IDENTIFICATION BY MASS SPECTROMETRY [LARGE SCALE ANALYSIS]</scope>
</reference>
<reference key="10">
    <citation type="journal article" date="2014" name="J. Proteomics">
        <title>An enzyme assisted RP-RPLC approach for in-depth analysis of human liver phosphoproteome.</title>
        <authorList>
            <person name="Bian Y."/>
            <person name="Song C."/>
            <person name="Cheng K."/>
            <person name="Dong M."/>
            <person name="Wang F."/>
            <person name="Huang J."/>
            <person name="Sun D."/>
            <person name="Wang L."/>
            <person name="Ye M."/>
            <person name="Zou H."/>
        </authorList>
    </citation>
    <scope>IDENTIFICATION BY MASS SPECTROMETRY [LARGE SCALE ANALYSIS]</scope>
    <source>
        <tissue>Liver</tissue>
    </source>
</reference>
<reference key="11">
    <citation type="journal article" date="2015" name="Proteomics">
        <title>N-terminome analysis of the human mitochondrial proteome.</title>
        <authorList>
            <person name="Vaca Jacome A.S."/>
            <person name="Rabilloud T."/>
            <person name="Schaeffer-Reiss C."/>
            <person name="Rompais M."/>
            <person name="Ayoub D."/>
            <person name="Lane L."/>
            <person name="Bairoch A."/>
            <person name="Van Dorsselaer A."/>
            <person name="Carapito C."/>
        </authorList>
    </citation>
    <scope>IDENTIFICATION BY MASS SPECTROMETRY [LARGE SCALE ANALYSIS]</scope>
</reference>
<reference key="12">
    <citation type="journal article" date="2000" name="Nature">
        <title>Structure and assembly of the Alu domain of the mammalian signal recognition particle.</title>
        <authorList>
            <person name="Weichenrieder O."/>
            <person name="Wild K."/>
            <person name="Strub K."/>
            <person name="Cusack S."/>
        </authorList>
    </citation>
    <scope>X-RAY CRYSTALLOGRAPHY (3.2 ANGSTROMS) OF 2-86 IN COMPLEX WITH SRP14</scope>
    <scope>FUNCTION</scope>
    <scope>SUBUNIT</scope>
</reference>
<reference evidence="7" key="13">
    <citation type="journal article" date="2021" name="Sci. Adv.">
        <title>Receptor compaction and GTPase rearrangement drive SRP-mediated cotranslational protein translocation into the ER.</title>
        <authorList>
            <person name="Lee J.H."/>
            <person name="Jomaa A."/>
            <person name="Jomaa A."/>
            <person name="Chung S."/>
            <person name="Hwang Fu Y.H."/>
            <person name="Qian R."/>
            <person name="Sun X."/>
            <person name="Hsieh H.H."/>
            <person name="Chandrasekar S."/>
            <person name="Bi X."/>
            <person name="Mattei S."/>
            <person name="Boehringer D."/>
            <person name="Weiss S."/>
            <person name="Ban N."/>
            <person name="Shan S.O."/>
        </authorList>
    </citation>
    <scope>STRUCTURE BY ELECTRON MICROSCOPY (3.20 ANGSTROMS) OF SIGNAL RECOGNITION PARTICLE IN COMPLEX WITH RIBOSOME NASCENT CHAIN COMPLEX AND THE SRP RECEPTOR</scope>
</reference>
<comment type="function">
    <text evidence="1 2">Component of the signal recognition particle (SRP) complex, a ribonucleoprotein complex that mediates the cotranslational targeting of secretory and membrane proteins to the endoplasmic reticulum (ER) (By similarity). SRP9 together with SRP14 and the Alu portion of the SRP RNA, constitutes the elongation arrest domain of SRP (PubMed:11089964). The complex of SRP9 and SRP14 is required for SRP RNA binding (By similarity).</text>
</comment>
<comment type="subunit">
    <text evidence="1 2">Heterodimer with SRP14; binds RNA as heterodimer (By similarity). Component of a signal recognition particle complex that consists of a 7SL RNA molecule of 300 nucleotides and six protein subunits: SRP72, SRP68, SRP54, SRP19, SRP14 and SRP9 (PubMed:11089964).</text>
</comment>
<comment type="interaction">
    <interactant intactId="EBI-350743">
        <id>P49458</id>
    </interactant>
    <interactant intactId="EBI-77797">
        <id>P35609</id>
        <label>ACTN2</label>
    </interactant>
    <organismsDiffer>false</organismsDiffer>
    <experiments>3</experiments>
</comment>
<comment type="interaction">
    <interactant intactId="EBI-350743">
        <id>P49458</id>
    </interactant>
    <interactant intactId="EBI-12143631">
        <id>Q6ZTQ4</id>
        <label>CDHR3</label>
    </interactant>
    <organismsDiffer>false</organismsDiffer>
    <experiments>3</experiments>
</comment>
<comment type="interaction">
    <interactant intactId="EBI-350743">
        <id>P49458</id>
    </interactant>
    <interactant intactId="EBI-21529239">
        <id>Q86TI2-2</id>
        <label>DPP9</label>
    </interactant>
    <organismsDiffer>false</organismsDiffer>
    <experiments>3</experiments>
</comment>
<comment type="interaction">
    <interactant intactId="EBI-350743">
        <id>P49458</id>
    </interactant>
    <interactant intactId="EBI-752324">
        <id>Q8N488</id>
        <label>RYBP</label>
    </interactant>
    <organismsDiffer>false</organismsDiffer>
    <experiments>3</experiments>
</comment>
<comment type="interaction">
    <interactant intactId="EBI-350743">
        <id>P49458</id>
    </interactant>
    <interactant intactId="EBI-353399">
        <id>P37108</id>
        <label>SRP14</label>
    </interactant>
    <organismsDiffer>false</organismsDiffer>
    <experiments>11</experiments>
</comment>
<comment type="interaction">
    <interactant intactId="EBI-15490029">
        <id>P49458-1</id>
    </interactant>
    <interactant intactId="EBI-353399">
        <id>P37108</id>
        <label>SRP14</label>
    </interactant>
    <organismsDiffer>false</organismsDiffer>
    <experiments>2</experiments>
</comment>
<comment type="subcellular location">
    <subcellularLocation>
        <location>Cytoplasm</location>
    </subcellularLocation>
</comment>
<comment type="alternative products">
    <event type="alternative splicing"/>
    <isoform>
        <id>P49458-1</id>
        <name>1</name>
        <sequence type="displayed"/>
    </isoform>
    <isoform>
        <id>P49458-2</id>
        <name>2</name>
        <sequence type="described" ref="VSP_041270"/>
    </isoform>
</comment>
<comment type="similarity">
    <text evidence="6">Belongs to the SRP9 family.</text>
</comment>
<comment type="online information" name="Wikipedia">
    <link uri="https://en.wikipedia.org/wiki/Signal-recognition_particle"/>
    <text>Signal recognition particle entry</text>
</comment>
<evidence type="ECO:0000250" key="1">
    <source>
        <dbReference type="UniProtKB" id="P21262"/>
    </source>
</evidence>
<evidence type="ECO:0000269" key="2">
    <source>
    </source>
</evidence>
<evidence type="ECO:0000269" key="3">
    <source ref="6"/>
</evidence>
<evidence type="ECO:0000303" key="4">
    <source>
    </source>
</evidence>
<evidence type="ECO:0000303" key="5">
    <source ref="2"/>
</evidence>
<evidence type="ECO:0000305" key="6"/>
<evidence type="ECO:0007744" key="7">
    <source>
        <dbReference type="PDB" id="7NFX"/>
    </source>
</evidence>
<evidence type="ECO:0007744" key="8">
    <source>
    </source>
</evidence>
<evidence type="ECO:0007829" key="9">
    <source>
        <dbReference type="PDB" id="4UYK"/>
    </source>
</evidence>
<evidence type="ECO:0007829" key="10">
    <source>
        <dbReference type="PDB" id="5AOX"/>
    </source>
</evidence>
<feature type="initiator methionine" description="Removed" evidence="3">
    <location>
        <position position="1"/>
    </location>
</feature>
<feature type="chain" id="PRO_0000135182" description="Signal recognition particle 9 kDa protein">
    <location>
        <begin position="2"/>
        <end position="86"/>
    </location>
</feature>
<feature type="modified residue" description="N6-acetyllysine" evidence="8">
    <location>
        <position position="52"/>
    </location>
</feature>
<feature type="splice variant" id="VSP_041270" description="In isoform 2." evidence="4 5">
    <original>CLVYKTDQAQDVKKIEKFHSQLMRLMVAKEARNVTMETE</original>
    <variation>RQCLALLLRLQCSGMIIAHCILDLLGSSGPLASAS</variation>
    <location>
        <begin position="48"/>
        <end position="86"/>
    </location>
</feature>
<feature type="strand" evidence="10">
    <location>
        <begin position="3"/>
        <end position="6"/>
    </location>
</feature>
<feature type="helix" evidence="10">
    <location>
        <begin position="7"/>
        <end position="20"/>
    </location>
</feature>
<feature type="turn" evidence="10">
    <location>
        <begin position="22"/>
        <end position="24"/>
    </location>
</feature>
<feature type="strand" evidence="10">
    <location>
        <begin position="26"/>
        <end position="32"/>
    </location>
</feature>
<feature type="turn" evidence="10">
    <location>
        <begin position="33"/>
        <end position="36"/>
    </location>
</feature>
<feature type="strand" evidence="10">
    <location>
        <begin position="37"/>
        <end position="43"/>
    </location>
</feature>
<feature type="strand" evidence="10">
    <location>
        <begin position="48"/>
        <end position="53"/>
    </location>
</feature>
<feature type="helix" evidence="10">
    <location>
        <begin position="57"/>
        <end position="73"/>
    </location>
</feature>
<feature type="strand" evidence="9">
    <location>
        <begin position="75"/>
        <end position="77"/>
    </location>
</feature>
<feature type="helix" evidence="9">
    <location>
        <begin position="78"/>
        <end position="80"/>
    </location>
</feature>
<feature type="sequence conflict" description="In Ref. 5; AAH21995." evidence="6" ref="5">
    <original>I</original>
    <variation>M</variation>
    <location sequence="P49458-2">
        <position position="64"/>
    </location>
</feature>
<accession>P49458</accession>
<accession>A8K0N0</accession>
<accession>Q6NVX0</accession>
<accession>Q8WTW0</accession>
<sequence length="86" mass="10112">MPQYQTWEEFSRAAEKLYLADPMKARVVLKYRHSDGNLCVKVTDDLVCLVYKTDQAQDVKKIEKFHSQLMRLMVAKEARNVTMETE</sequence>
<proteinExistence type="evidence at protein level"/>
<protein>
    <recommendedName>
        <fullName>Signal recognition particle 9 kDa protein</fullName>
        <shortName>SRP9</shortName>
    </recommendedName>
</protein>